<dbReference type="EC" id="7.1.1.-" evidence="1"/>
<dbReference type="EMBL" id="AP000423">
    <property type="protein sequence ID" value="BAA84389.1"/>
    <property type="molecule type" value="Genomic_DNA"/>
</dbReference>
<dbReference type="RefSeq" id="NP_051063.1">
    <property type="nucleotide sequence ID" value="NC_000932.1"/>
</dbReference>
<dbReference type="PDB" id="7WFG">
    <property type="method" value="EM"/>
    <property type="resolution" value="4.33 A"/>
    <property type="chains" value="K=1-225"/>
</dbReference>
<dbReference type="PDB" id="7WG5">
    <property type="method" value="EM"/>
    <property type="resolution" value="3.89 A"/>
    <property type="chains" value="K=1-225"/>
</dbReference>
<dbReference type="PDBsum" id="7WFG"/>
<dbReference type="PDBsum" id="7WG5"/>
<dbReference type="EMDB" id="EMD-32465"/>
<dbReference type="EMDB" id="EMD-32477"/>
<dbReference type="SMR" id="P56756"/>
<dbReference type="BioGRID" id="29963">
    <property type="interactions" value="3"/>
</dbReference>
<dbReference type="FunCoup" id="P56756">
    <property type="interactions" value="41"/>
</dbReference>
<dbReference type="STRING" id="3702.P56756"/>
<dbReference type="TCDB" id="3.D.1.8.1">
    <property type="family name" value="the h+ or na+-translocating nadh dehydrogenase (ndh) family"/>
</dbReference>
<dbReference type="iPTMnet" id="P56756"/>
<dbReference type="PaxDb" id="3702-ATCG00430.1"/>
<dbReference type="ProteomicsDB" id="251320"/>
<dbReference type="EnsemblPlants" id="ATCG00430.1">
    <property type="protein sequence ID" value="ATCG00430.1"/>
    <property type="gene ID" value="ATCG00430"/>
</dbReference>
<dbReference type="GeneID" id="844761"/>
<dbReference type="Gramene" id="ATCG00430.1">
    <property type="protein sequence ID" value="ATCG00430.1"/>
    <property type="gene ID" value="ATCG00430"/>
</dbReference>
<dbReference type="KEGG" id="ath:ArthCp026"/>
<dbReference type="Araport" id="ATCG00430"/>
<dbReference type="TAIR" id="ATCG00430">
    <property type="gene designation" value="PSBG"/>
</dbReference>
<dbReference type="eggNOG" id="KOG1687">
    <property type="taxonomic scope" value="Eukaryota"/>
</dbReference>
<dbReference type="HOGENOM" id="CLU_055737_2_1_1"/>
<dbReference type="InParanoid" id="P56756"/>
<dbReference type="OMA" id="TMKMAPQ"/>
<dbReference type="BioCyc" id="ARA:ATCG00430-MONOMER"/>
<dbReference type="PRO" id="PR:P56756"/>
<dbReference type="Proteomes" id="UP000006548">
    <property type="component" value="Chloroplast Pltd"/>
</dbReference>
<dbReference type="ExpressionAtlas" id="P56756">
    <property type="expression patterns" value="baseline and differential"/>
</dbReference>
<dbReference type="GO" id="GO:0009507">
    <property type="term" value="C:chloroplast"/>
    <property type="evidence" value="ECO:0007005"/>
    <property type="project" value="TAIR"/>
</dbReference>
<dbReference type="GO" id="GO:0009535">
    <property type="term" value="C:chloroplast thylakoid membrane"/>
    <property type="evidence" value="ECO:0007669"/>
    <property type="project" value="UniProtKB-SubCell"/>
</dbReference>
<dbReference type="GO" id="GO:0009536">
    <property type="term" value="C:plastid"/>
    <property type="evidence" value="ECO:0007005"/>
    <property type="project" value="TAIR"/>
</dbReference>
<dbReference type="GO" id="GO:0051539">
    <property type="term" value="F:4 iron, 4 sulfur cluster binding"/>
    <property type="evidence" value="ECO:0007669"/>
    <property type="project" value="UniProtKB-KW"/>
</dbReference>
<dbReference type="GO" id="GO:0005506">
    <property type="term" value="F:iron ion binding"/>
    <property type="evidence" value="ECO:0007669"/>
    <property type="project" value="UniProtKB-UniRule"/>
</dbReference>
<dbReference type="GO" id="GO:0008137">
    <property type="term" value="F:NADH dehydrogenase (ubiquinone) activity"/>
    <property type="evidence" value="ECO:0007669"/>
    <property type="project" value="InterPro"/>
</dbReference>
<dbReference type="GO" id="GO:0048038">
    <property type="term" value="F:quinone binding"/>
    <property type="evidence" value="ECO:0007669"/>
    <property type="project" value="UniProtKB-KW"/>
</dbReference>
<dbReference type="GO" id="GO:0019684">
    <property type="term" value="P:photosynthesis, light reaction"/>
    <property type="evidence" value="ECO:0007669"/>
    <property type="project" value="UniProtKB-UniRule"/>
</dbReference>
<dbReference type="FunFam" id="3.40.50.12280:FF:000003">
    <property type="entry name" value="NAD(P)H-quinone oxidoreductase subunit K, chloroplastic"/>
    <property type="match status" value="1"/>
</dbReference>
<dbReference type="Gene3D" id="3.40.50.12280">
    <property type="match status" value="1"/>
</dbReference>
<dbReference type="HAMAP" id="MF_01356">
    <property type="entry name" value="NDH1_NuoB"/>
    <property type="match status" value="1"/>
</dbReference>
<dbReference type="InterPro" id="IPR006137">
    <property type="entry name" value="NADH_UbQ_OxRdtase-like_20kDa"/>
</dbReference>
<dbReference type="InterPro" id="IPR006138">
    <property type="entry name" value="NADH_UQ_OxRdtase_20Kd_su"/>
</dbReference>
<dbReference type="NCBIfam" id="TIGR01957">
    <property type="entry name" value="nuoB_fam"/>
    <property type="match status" value="1"/>
</dbReference>
<dbReference type="NCBIfam" id="NF005012">
    <property type="entry name" value="PRK06411.1"/>
    <property type="match status" value="1"/>
</dbReference>
<dbReference type="PANTHER" id="PTHR11995">
    <property type="entry name" value="NADH DEHYDROGENASE"/>
    <property type="match status" value="1"/>
</dbReference>
<dbReference type="PANTHER" id="PTHR11995:SF14">
    <property type="entry name" value="NADH DEHYDROGENASE [UBIQUINONE] IRON-SULFUR PROTEIN 7, MITOCHONDRIAL"/>
    <property type="match status" value="1"/>
</dbReference>
<dbReference type="Pfam" id="PF01058">
    <property type="entry name" value="Oxidored_q6"/>
    <property type="match status" value="1"/>
</dbReference>
<dbReference type="SUPFAM" id="SSF56770">
    <property type="entry name" value="HydA/Nqo6-like"/>
    <property type="match status" value="1"/>
</dbReference>
<dbReference type="PROSITE" id="PS01150">
    <property type="entry name" value="COMPLEX1_20K"/>
    <property type="match status" value="1"/>
</dbReference>
<geneLocation type="chloroplast"/>
<accession>P56756</accession>
<keyword id="KW-0002">3D-structure</keyword>
<keyword id="KW-0004">4Fe-4S</keyword>
<keyword id="KW-0150">Chloroplast</keyword>
<keyword id="KW-0408">Iron</keyword>
<keyword id="KW-0411">Iron-sulfur</keyword>
<keyword id="KW-0472">Membrane</keyword>
<keyword id="KW-0479">Metal-binding</keyword>
<keyword id="KW-0520">NAD</keyword>
<keyword id="KW-0521">NADP</keyword>
<keyword id="KW-0934">Plastid</keyword>
<keyword id="KW-0618">Plastoquinone</keyword>
<keyword id="KW-0874">Quinone</keyword>
<keyword id="KW-1185">Reference proteome</keyword>
<keyword id="KW-0793">Thylakoid</keyword>
<keyword id="KW-1278">Translocase</keyword>
<keyword id="KW-0813">Transport</keyword>
<proteinExistence type="evidence at protein level"/>
<reference key="1">
    <citation type="journal article" date="1999" name="DNA Res.">
        <title>Complete structure of the chloroplast genome of Arabidopsis thaliana.</title>
        <authorList>
            <person name="Sato S."/>
            <person name="Nakamura Y."/>
            <person name="Kaneko T."/>
            <person name="Asamizu E."/>
            <person name="Tabata S."/>
        </authorList>
    </citation>
    <scope>NUCLEOTIDE SEQUENCE [LARGE SCALE GENOMIC DNA]</scope>
    <source>
        <strain>cv. Columbia</strain>
    </source>
</reference>
<organism>
    <name type="scientific">Arabidopsis thaliana</name>
    <name type="common">Mouse-ear cress</name>
    <dbReference type="NCBI Taxonomy" id="3702"/>
    <lineage>
        <taxon>Eukaryota</taxon>
        <taxon>Viridiplantae</taxon>
        <taxon>Streptophyta</taxon>
        <taxon>Embryophyta</taxon>
        <taxon>Tracheophyta</taxon>
        <taxon>Spermatophyta</taxon>
        <taxon>Magnoliopsida</taxon>
        <taxon>eudicotyledons</taxon>
        <taxon>Gunneridae</taxon>
        <taxon>Pentapetalae</taxon>
        <taxon>rosids</taxon>
        <taxon>malvids</taxon>
        <taxon>Brassicales</taxon>
        <taxon>Brassicaceae</taxon>
        <taxon>Camelineae</taxon>
        <taxon>Arabidopsis</taxon>
    </lineage>
</organism>
<gene>
    <name evidence="1" type="primary">ndhK</name>
    <name type="synonym">psbG</name>
    <name type="ordered locus">AtCg00430</name>
</gene>
<sequence>MNSIKFPILDRTTKNSVISTTLNDLSNWSRLSSLWPLLYGTSCCFIEFASLIGSRFDFDRYGLVPRSSPRQADLILTAGTVTMKMAPSLVRLYEQMPEPKYVIAMGACTITGGMFSTDSYSTVRGVDKLIPVDVYLPGCPPKPEAVIDAITKLRKKIAREIYKDRIRPQQGNRCFTTNHKFFVVRSPHIGNYDQELLYPPSSTSEISTETFFKYKSPVSSHELVN</sequence>
<evidence type="ECO:0000255" key="1">
    <source>
        <dbReference type="HAMAP-Rule" id="MF_01356"/>
    </source>
</evidence>
<protein>
    <recommendedName>
        <fullName evidence="1">NAD(P)H-quinone oxidoreductase subunit K, chloroplastic</fullName>
        <ecNumber evidence="1">7.1.1.-</ecNumber>
    </recommendedName>
    <alternativeName>
        <fullName evidence="1">NAD(P)H dehydrogenase subunit K</fullName>
    </alternativeName>
    <alternativeName>
        <fullName evidence="1">NADH-plastoquinone oxidoreductase subunit K</fullName>
    </alternativeName>
</protein>
<feature type="chain" id="PRO_0000118743" description="NAD(P)H-quinone oxidoreductase subunit K, chloroplastic">
    <location>
        <begin position="1"/>
        <end position="225"/>
    </location>
</feature>
<feature type="binding site" evidence="1">
    <location>
        <position position="43"/>
    </location>
    <ligand>
        <name>[4Fe-4S] cluster</name>
        <dbReference type="ChEBI" id="CHEBI:49883"/>
    </ligand>
</feature>
<feature type="binding site" evidence="1">
    <location>
        <position position="44"/>
    </location>
    <ligand>
        <name>[4Fe-4S] cluster</name>
        <dbReference type="ChEBI" id="CHEBI:49883"/>
    </ligand>
</feature>
<feature type="binding site" evidence="1">
    <location>
        <position position="108"/>
    </location>
    <ligand>
        <name>[4Fe-4S] cluster</name>
        <dbReference type="ChEBI" id="CHEBI:49883"/>
    </ligand>
</feature>
<feature type="binding site" evidence="1">
    <location>
        <position position="139"/>
    </location>
    <ligand>
        <name>[4Fe-4S] cluster</name>
        <dbReference type="ChEBI" id="CHEBI:49883"/>
    </ligand>
</feature>
<name>NDHK_ARATH</name>
<comment type="function">
    <text evidence="1">NDH shuttles electrons from NAD(P)H:plastoquinone, via FMN and iron-sulfur (Fe-S) centers, to quinones in the photosynthetic chain and possibly in a chloroplast respiratory chain. The immediate electron acceptor for the enzyme in this species is believed to be plastoquinone. Couples the redox reaction to proton translocation, and thus conserves the redox energy in a proton gradient.</text>
</comment>
<comment type="catalytic activity">
    <reaction evidence="1">
        <text>a plastoquinone + NADH + (n+1) H(+)(in) = a plastoquinol + NAD(+) + n H(+)(out)</text>
        <dbReference type="Rhea" id="RHEA:42608"/>
        <dbReference type="Rhea" id="RHEA-COMP:9561"/>
        <dbReference type="Rhea" id="RHEA-COMP:9562"/>
        <dbReference type="ChEBI" id="CHEBI:15378"/>
        <dbReference type="ChEBI" id="CHEBI:17757"/>
        <dbReference type="ChEBI" id="CHEBI:57540"/>
        <dbReference type="ChEBI" id="CHEBI:57945"/>
        <dbReference type="ChEBI" id="CHEBI:62192"/>
    </reaction>
</comment>
<comment type="catalytic activity">
    <reaction evidence="1">
        <text>a plastoquinone + NADPH + (n+1) H(+)(in) = a plastoquinol + NADP(+) + n H(+)(out)</text>
        <dbReference type="Rhea" id="RHEA:42612"/>
        <dbReference type="Rhea" id="RHEA-COMP:9561"/>
        <dbReference type="Rhea" id="RHEA-COMP:9562"/>
        <dbReference type="ChEBI" id="CHEBI:15378"/>
        <dbReference type="ChEBI" id="CHEBI:17757"/>
        <dbReference type="ChEBI" id="CHEBI:57783"/>
        <dbReference type="ChEBI" id="CHEBI:58349"/>
        <dbReference type="ChEBI" id="CHEBI:62192"/>
    </reaction>
</comment>
<comment type="cofactor">
    <cofactor evidence="1">
        <name>[4Fe-4S] cluster</name>
        <dbReference type="ChEBI" id="CHEBI:49883"/>
    </cofactor>
    <text evidence="1">Binds 1 [4Fe-4S] cluster.</text>
</comment>
<comment type="subunit">
    <text evidence="1">NDH is composed of at least 16 different subunits, 5 of which are encoded in the nucleus.</text>
</comment>
<comment type="subcellular location">
    <subcellularLocation>
        <location evidence="1">Plastid</location>
        <location evidence="1">Chloroplast thylakoid membrane</location>
        <topology evidence="1">Peripheral membrane protein</topology>
        <orientation evidence="1">Stromal side</orientation>
    </subcellularLocation>
</comment>
<comment type="similarity">
    <text evidence="1">Belongs to the complex I 20 kDa subunit family.</text>
</comment>